<dbReference type="EC" id="4.1.1.17"/>
<dbReference type="EMBL" id="M92441">
    <property type="protein sequence ID" value="AAA92339.1"/>
    <property type="molecule type" value="mRNA"/>
</dbReference>
<dbReference type="EMBL" id="U36394">
    <property type="protein sequence ID" value="AAA79849.1"/>
    <property type="molecule type" value="Genomic_DNA"/>
</dbReference>
<dbReference type="EMBL" id="U18531">
    <property type="protein sequence ID" value="AAA86696.1"/>
    <property type="molecule type" value="Genomic_DNA"/>
</dbReference>
<dbReference type="EMBL" id="BC146218">
    <property type="protein sequence ID" value="AAI46219.1"/>
    <property type="molecule type" value="mRNA"/>
</dbReference>
<dbReference type="RefSeq" id="NP_776555.1">
    <property type="nucleotide sequence ID" value="NM_174130.2"/>
</dbReference>
<dbReference type="RefSeq" id="XP_005212975.1">
    <property type="nucleotide sequence ID" value="XM_005212918.4"/>
</dbReference>
<dbReference type="RefSeq" id="XP_005212976.1">
    <property type="nucleotide sequence ID" value="XM_005212919.5"/>
</dbReference>
<dbReference type="RefSeq" id="XP_010808467.1">
    <property type="nucleotide sequence ID" value="XM_010810165.2"/>
</dbReference>
<dbReference type="RefSeq" id="XP_024854032.1">
    <property type="nucleotide sequence ID" value="XM_024998264.2"/>
</dbReference>
<dbReference type="SMR" id="P27117"/>
<dbReference type="FunCoup" id="P27117">
    <property type="interactions" value="1211"/>
</dbReference>
<dbReference type="STRING" id="9913.ENSBTAP00000005575"/>
<dbReference type="BindingDB" id="P27117"/>
<dbReference type="ChEMBL" id="CHEMBL3243912"/>
<dbReference type="PaxDb" id="9913-ENSBTAP00000005575"/>
<dbReference type="Ensembl" id="ENSBTAT00000005575.6">
    <property type="protein sequence ID" value="ENSBTAP00000005575.4"/>
    <property type="gene ID" value="ENSBTAG00000004256.6"/>
</dbReference>
<dbReference type="GeneID" id="281365"/>
<dbReference type="KEGG" id="bta:281365"/>
<dbReference type="CTD" id="4953"/>
<dbReference type="VEuPathDB" id="HostDB:ENSBTAG00000004256"/>
<dbReference type="VGNC" id="VGNC:112456">
    <property type="gene designation" value="ODC1"/>
</dbReference>
<dbReference type="eggNOG" id="KOG0622">
    <property type="taxonomic scope" value="Eukaryota"/>
</dbReference>
<dbReference type="GeneTree" id="ENSGT00950000182995"/>
<dbReference type="HOGENOM" id="CLU_026444_1_2_1"/>
<dbReference type="InParanoid" id="P27117"/>
<dbReference type="OMA" id="AYCRSMA"/>
<dbReference type="OrthoDB" id="5034579at2759"/>
<dbReference type="TreeFam" id="TF300760"/>
<dbReference type="Reactome" id="R-BTA-350562">
    <property type="pathway name" value="Regulation of ornithine decarboxylase (ODC)"/>
</dbReference>
<dbReference type="Reactome" id="R-BTA-351202">
    <property type="pathway name" value="Metabolism of polyamines"/>
</dbReference>
<dbReference type="UniPathway" id="UPA00535">
    <property type="reaction ID" value="UER00288"/>
</dbReference>
<dbReference type="Proteomes" id="UP000009136">
    <property type="component" value="Chromosome 11"/>
</dbReference>
<dbReference type="Bgee" id="ENSBTAG00000004256">
    <property type="expression patterns" value="Expressed in spermatid and 108 other cell types or tissues"/>
</dbReference>
<dbReference type="GO" id="GO:0005737">
    <property type="term" value="C:cytoplasm"/>
    <property type="evidence" value="ECO:0000250"/>
    <property type="project" value="UniProtKB"/>
</dbReference>
<dbReference type="GO" id="GO:0004586">
    <property type="term" value="F:ornithine decarboxylase activity"/>
    <property type="evidence" value="ECO:0000250"/>
    <property type="project" value="UniProtKB"/>
</dbReference>
<dbReference type="GO" id="GO:0042803">
    <property type="term" value="F:protein homodimerization activity"/>
    <property type="evidence" value="ECO:0000250"/>
    <property type="project" value="UniProtKB"/>
</dbReference>
<dbReference type="GO" id="GO:0033387">
    <property type="term" value="P:putrescine biosynthetic process from arginine, via ornithine"/>
    <property type="evidence" value="ECO:0000250"/>
    <property type="project" value="UniProtKB"/>
</dbReference>
<dbReference type="GO" id="GO:0042176">
    <property type="term" value="P:regulation of protein catabolic process"/>
    <property type="evidence" value="ECO:0000250"/>
    <property type="project" value="UniProtKB"/>
</dbReference>
<dbReference type="GO" id="GO:0009615">
    <property type="term" value="P:response to virus"/>
    <property type="evidence" value="ECO:0007669"/>
    <property type="project" value="Ensembl"/>
</dbReference>
<dbReference type="CDD" id="cd00622">
    <property type="entry name" value="PLPDE_III_ODC"/>
    <property type="match status" value="1"/>
</dbReference>
<dbReference type="FunFam" id="2.40.37.10:FF:000005">
    <property type="entry name" value="Ornithine decarboxylase"/>
    <property type="match status" value="1"/>
</dbReference>
<dbReference type="FunFam" id="3.20.20.10:FF:000006">
    <property type="entry name" value="Ornithine decarboxylase 1"/>
    <property type="match status" value="1"/>
</dbReference>
<dbReference type="Gene3D" id="3.20.20.10">
    <property type="entry name" value="Alanine racemase"/>
    <property type="match status" value="1"/>
</dbReference>
<dbReference type="Gene3D" id="2.40.37.10">
    <property type="entry name" value="Lyase, Ornithine Decarboxylase, Chain A, domain 1"/>
    <property type="match status" value="1"/>
</dbReference>
<dbReference type="InterPro" id="IPR009006">
    <property type="entry name" value="Ala_racemase/Decarboxylase_C"/>
</dbReference>
<dbReference type="InterPro" id="IPR022643">
    <property type="entry name" value="De-COase2_C"/>
</dbReference>
<dbReference type="InterPro" id="IPR022657">
    <property type="entry name" value="De-COase2_CS"/>
</dbReference>
<dbReference type="InterPro" id="IPR022644">
    <property type="entry name" value="De-COase2_N"/>
</dbReference>
<dbReference type="InterPro" id="IPR022653">
    <property type="entry name" value="De-COase2_pyr-phos_BS"/>
</dbReference>
<dbReference type="InterPro" id="IPR000183">
    <property type="entry name" value="Orn/DAP/Arg_de-COase"/>
</dbReference>
<dbReference type="InterPro" id="IPR002433">
    <property type="entry name" value="Orn_de-COase"/>
</dbReference>
<dbReference type="InterPro" id="IPR029066">
    <property type="entry name" value="PLP-binding_barrel"/>
</dbReference>
<dbReference type="PANTHER" id="PTHR11482">
    <property type="entry name" value="ARGININE/DIAMINOPIMELATE/ORNITHINE DECARBOXYLASE"/>
    <property type="match status" value="1"/>
</dbReference>
<dbReference type="PANTHER" id="PTHR11482:SF42">
    <property type="entry name" value="ORNITHINE DECARBOXYLASE"/>
    <property type="match status" value="1"/>
</dbReference>
<dbReference type="Pfam" id="PF02784">
    <property type="entry name" value="Orn_Arg_deC_N"/>
    <property type="match status" value="1"/>
</dbReference>
<dbReference type="Pfam" id="PF00278">
    <property type="entry name" value="Orn_DAP_Arg_deC"/>
    <property type="match status" value="1"/>
</dbReference>
<dbReference type="PRINTS" id="PR01179">
    <property type="entry name" value="ODADCRBXLASE"/>
</dbReference>
<dbReference type="PRINTS" id="PR01182">
    <property type="entry name" value="ORNDCRBXLASE"/>
</dbReference>
<dbReference type="SUPFAM" id="SSF50621">
    <property type="entry name" value="Alanine racemase C-terminal domain-like"/>
    <property type="match status" value="1"/>
</dbReference>
<dbReference type="SUPFAM" id="SSF51419">
    <property type="entry name" value="PLP-binding barrel"/>
    <property type="match status" value="1"/>
</dbReference>
<dbReference type="PROSITE" id="PS00878">
    <property type="entry name" value="ODR_DC_2_1"/>
    <property type="match status" value="1"/>
</dbReference>
<dbReference type="PROSITE" id="PS00879">
    <property type="entry name" value="ODR_DC_2_2"/>
    <property type="match status" value="1"/>
</dbReference>
<keyword id="KW-0210">Decarboxylase</keyword>
<keyword id="KW-0456">Lyase</keyword>
<keyword id="KW-0597">Phosphoprotein</keyword>
<keyword id="KW-0620">Polyamine biosynthesis</keyword>
<keyword id="KW-0663">Pyridoxal phosphate</keyword>
<keyword id="KW-1185">Reference proteome</keyword>
<keyword id="KW-0702">S-nitrosylation</keyword>
<comment type="function">
    <text evidence="3">Catalyzes the first and rate-limiting step of polyamine biosynthesis that converts ornithine into putrescine, which is the precursor for the polyamines, spermidine and spermine. Polyamines are essential for cell proliferation and are implicated in cellular processes, ranging from DNA replication to apoptosis.</text>
</comment>
<comment type="catalytic activity">
    <reaction evidence="3">
        <text>L-ornithine + H(+) = putrescine + CO2</text>
        <dbReference type="Rhea" id="RHEA:22964"/>
        <dbReference type="ChEBI" id="CHEBI:15378"/>
        <dbReference type="ChEBI" id="CHEBI:16526"/>
        <dbReference type="ChEBI" id="CHEBI:46911"/>
        <dbReference type="ChEBI" id="CHEBI:326268"/>
        <dbReference type="EC" id="4.1.1.17"/>
    </reaction>
</comment>
<comment type="cofactor">
    <cofactor evidence="3">
        <name>pyridoxal 5'-phosphate</name>
        <dbReference type="ChEBI" id="CHEBI:597326"/>
    </cofactor>
</comment>
<comment type="activity regulation">
    <text evidence="3">Inhibited by antizymes (AZs) OAZ1, OAZ2 and OAZ3 in response to polyamine levels. AZs inhibit the assembly of the functional homodimer by binding to ODC monomers. Additionally, OAZ1 targets ODC monomers for ubiquitin-independent proteolytic destruction by the 26S proteasome.</text>
</comment>
<comment type="pathway">
    <text>Amine and polyamine biosynthesis; putrescine biosynthesis via L-ornithine pathway; putrescine from L-ornithine: step 1/1.</text>
</comment>
<comment type="subunit">
    <text evidence="1">Homodimer. Only the dimer is catalytically active, as the active sites are constructed of residues from both monomers.</text>
</comment>
<comment type="similarity">
    <text evidence="4">Belongs to the Orn/Lys/Arg decarboxylase class-II family.</text>
</comment>
<accession>P27117</accession>
<accession>A6H7E8</accession>
<organism>
    <name type="scientific">Bos taurus</name>
    <name type="common">Bovine</name>
    <dbReference type="NCBI Taxonomy" id="9913"/>
    <lineage>
        <taxon>Eukaryota</taxon>
        <taxon>Metazoa</taxon>
        <taxon>Chordata</taxon>
        <taxon>Craniata</taxon>
        <taxon>Vertebrata</taxon>
        <taxon>Euteleostomi</taxon>
        <taxon>Mammalia</taxon>
        <taxon>Eutheria</taxon>
        <taxon>Laurasiatheria</taxon>
        <taxon>Artiodactyla</taxon>
        <taxon>Ruminantia</taxon>
        <taxon>Pecora</taxon>
        <taxon>Bovidae</taxon>
        <taxon>Bovinae</taxon>
        <taxon>Bos</taxon>
    </lineage>
</organism>
<reference key="1">
    <citation type="journal article" date="1995" name="Genome">
        <title>Molecular cloning of a bovine ornithine decarboxylase cDNA and its use in the detection of restriction fragment length polymorphisms in Holsteins.</title>
        <authorList>
            <person name="Yao J."/>
            <person name="Zadworny D."/>
            <person name="Kuhnlein U."/>
            <person name="Hayes J.F."/>
        </authorList>
    </citation>
    <scope>NUCLEOTIDE SEQUENCE [MRNA]</scope>
    <source>
        <strain>Holstein</strain>
        <tissue>Liver</tissue>
    </source>
</reference>
<reference key="2">
    <citation type="journal article" date="1998" name="DNA Seq.">
        <title>Bovine ornithine decarboxylase gene: cloning, structure and polymorphisms.</title>
        <authorList>
            <person name="Yao J."/>
            <person name="Zadworny D."/>
            <person name="Aggrey S.E."/>
            <person name="Kuhnlein U."/>
            <person name="Hayes J.F."/>
        </authorList>
    </citation>
    <scope>NUCLEOTIDE SEQUENCE [GENOMIC DNA]</scope>
</reference>
<reference key="3">
    <citation type="submission" date="2007-06" db="EMBL/GenBank/DDBJ databases">
        <authorList>
            <consortium name="NIH - Mammalian Gene Collection (MGC) project"/>
        </authorList>
    </citation>
    <scope>NUCLEOTIDE SEQUENCE [LARGE SCALE MRNA]</scope>
    <source>
        <strain>Hereford</strain>
        <tissue>Fetal skin</tissue>
    </source>
</reference>
<sequence>MNSFSNEEFDCHFLDEGFTAKDILDQKINEVSYSDDKDAFYVADLGDILKKHLRWLKALPRVTPFYAVKCNDSRTIVKTLAAIGTGFDCASKTEIQLVQSLGVPPERIIYANPCKQVSQIKYAANNGVQMMTFDSEVELMKVARAHPKAKLVLRIATDDSKAVCRLSVKFGATLKTSRLLLERAKELDIDVIGVSFHVGSGCTDPETFVQAISDARCVFDMGAEVGFNMYLLDIGGGFPGSEDVKLKFEEITSVINPALDKYFPSDSGVRIIAEPGRYYVASAFTLAVNIIAKKLVLKEQTGSDDEEESTDRTFMYYVNDGVYGSFNCILYDHAHVKPLLQKRPKPDEKYYSSSIWGPTCDGLDRIVERCNLPEMHVGDWMLFENMGAYTVAAASTFNGFQRPTIYYVMSGPTWQLMQQIRTQDFPPGVEEPDVGPLPVSCAWESGMKRHSAACASTRINV</sequence>
<proteinExistence type="evidence at transcript level"/>
<feature type="chain" id="PRO_0000149889" description="Ornithine decarboxylase">
    <location>
        <begin position="1"/>
        <end position="461"/>
    </location>
</feature>
<feature type="active site" description="Proton donor; shared with dimeric partner" evidence="3">
    <location>
        <position position="360"/>
    </location>
</feature>
<feature type="binding site" evidence="3">
    <location>
        <position position="200"/>
    </location>
    <ligand>
        <name>pyridoxal 5'-phosphate</name>
        <dbReference type="ChEBI" id="CHEBI:597326"/>
    </ligand>
</feature>
<feature type="binding site" evidence="3">
    <location>
        <position position="237"/>
    </location>
    <ligand>
        <name>pyridoxal 5'-phosphate</name>
        <dbReference type="ChEBI" id="CHEBI:597326"/>
    </ligand>
</feature>
<feature type="binding site" evidence="3">
    <location>
        <begin position="274"/>
        <end position="277"/>
    </location>
    <ligand>
        <name>pyridoxal 5'-phosphate</name>
        <dbReference type="ChEBI" id="CHEBI:597326"/>
    </ligand>
</feature>
<feature type="binding site" description="in other chain" evidence="2">
    <location>
        <begin position="331"/>
        <end position="332"/>
    </location>
    <ligand>
        <name>substrate</name>
        <note>ligand shared between dimeric partners</note>
    </ligand>
</feature>
<feature type="binding site" evidence="2">
    <location>
        <position position="361"/>
    </location>
    <ligand>
        <name>substrate</name>
        <note>ligand shared between dimeric partners</note>
    </ligand>
</feature>
<feature type="binding site" evidence="3">
    <location>
        <position position="389"/>
    </location>
    <ligand>
        <name>pyridoxal 5'-phosphate</name>
        <dbReference type="ChEBI" id="CHEBI:597326"/>
    </ligand>
</feature>
<feature type="site" description="Stacks against the aromatic ring of pyridoxal phosphate and stabilizes reaction intermediates" evidence="1">
    <location>
        <position position="197"/>
    </location>
</feature>
<feature type="modified residue" description="N6-(pyridoxal phosphate)lysine" evidence="3">
    <location>
        <position position="69"/>
    </location>
</feature>
<feature type="modified residue" description="Phosphoserine; by CK2" evidence="1">
    <location>
        <position position="303"/>
    </location>
</feature>
<feature type="modified residue" description="S-nitrosocysteine" evidence="3">
    <location>
        <position position="360"/>
    </location>
</feature>
<gene>
    <name type="primary">ODC1</name>
    <name type="synonym">ODC</name>
</gene>
<name>DCOR_BOVIN</name>
<evidence type="ECO:0000250" key="1">
    <source>
        <dbReference type="UniProtKB" id="P00860"/>
    </source>
</evidence>
<evidence type="ECO:0000250" key="2">
    <source>
        <dbReference type="UniProtKB" id="P07805"/>
    </source>
</evidence>
<evidence type="ECO:0000250" key="3">
    <source>
        <dbReference type="UniProtKB" id="P11926"/>
    </source>
</evidence>
<evidence type="ECO:0000305" key="4"/>
<protein>
    <recommendedName>
        <fullName>Ornithine decarboxylase</fullName>
        <shortName>ODC</shortName>
        <ecNumber>4.1.1.17</ecNumber>
    </recommendedName>
</protein>